<organism>
    <name type="scientific">Escherichia coli O157:H7</name>
    <dbReference type="NCBI Taxonomy" id="83334"/>
    <lineage>
        <taxon>Bacteria</taxon>
        <taxon>Pseudomonadati</taxon>
        <taxon>Pseudomonadota</taxon>
        <taxon>Gammaproteobacteria</taxon>
        <taxon>Enterobacterales</taxon>
        <taxon>Enterobacteriaceae</taxon>
        <taxon>Escherichia</taxon>
    </lineage>
</organism>
<name>YIAW_ECO57</name>
<protein>
    <recommendedName>
        <fullName>Inner membrane protein YiaW</fullName>
    </recommendedName>
</protein>
<reference key="1">
    <citation type="journal article" date="2001" name="Nature">
        <title>Genome sequence of enterohaemorrhagic Escherichia coli O157:H7.</title>
        <authorList>
            <person name="Perna N.T."/>
            <person name="Plunkett G. III"/>
            <person name="Burland V."/>
            <person name="Mau B."/>
            <person name="Glasner J.D."/>
            <person name="Rose D.J."/>
            <person name="Mayhew G.F."/>
            <person name="Evans P.S."/>
            <person name="Gregor J."/>
            <person name="Kirkpatrick H.A."/>
            <person name="Posfai G."/>
            <person name="Hackett J."/>
            <person name="Klink S."/>
            <person name="Boutin A."/>
            <person name="Shao Y."/>
            <person name="Miller L."/>
            <person name="Grotbeck E.J."/>
            <person name="Davis N.W."/>
            <person name="Lim A."/>
            <person name="Dimalanta E.T."/>
            <person name="Potamousis K."/>
            <person name="Apodaca J."/>
            <person name="Anantharaman T.S."/>
            <person name="Lin J."/>
            <person name="Yen G."/>
            <person name="Schwartz D.C."/>
            <person name="Welch R.A."/>
            <person name="Blattner F.R."/>
        </authorList>
    </citation>
    <scope>NUCLEOTIDE SEQUENCE [LARGE SCALE GENOMIC DNA]</scope>
    <source>
        <strain>O157:H7 / EDL933 / ATCC 700927 / EHEC</strain>
    </source>
</reference>
<reference key="2">
    <citation type="journal article" date="2001" name="DNA Res.">
        <title>Complete genome sequence of enterohemorrhagic Escherichia coli O157:H7 and genomic comparison with a laboratory strain K-12.</title>
        <authorList>
            <person name="Hayashi T."/>
            <person name="Makino K."/>
            <person name="Ohnishi M."/>
            <person name="Kurokawa K."/>
            <person name="Ishii K."/>
            <person name="Yokoyama K."/>
            <person name="Han C.-G."/>
            <person name="Ohtsubo E."/>
            <person name="Nakayama K."/>
            <person name="Murata T."/>
            <person name="Tanaka M."/>
            <person name="Tobe T."/>
            <person name="Iida T."/>
            <person name="Takami H."/>
            <person name="Honda T."/>
            <person name="Sasakawa C."/>
            <person name="Ogasawara N."/>
            <person name="Yasunaga T."/>
            <person name="Kuhara S."/>
            <person name="Shiba T."/>
            <person name="Hattori M."/>
            <person name="Shinagawa H."/>
        </authorList>
    </citation>
    <scope>NUCLEOTIDE SEQUENCE [LARGE SCALE GENOMIC DNA]</scope>
    <source>
        <strain>O157:H7 / Sakai / RIMD 0509952 / EHEC</strain>
    </source>
</reference>
<accession>P0ADK5</accession>
<accession>P37684</accession>
<keyword id="KW-0997">Cell inner membrane</keyword>
<keyword id="KW-1003">Cell membrane</keyword>
<keyword id="KW-0472">Membrane</keyword>
<keyword id="KW-1185">Reference proteome</keyword>
<keyword id="KW-0812">Transmembrane</keyword>
<keyword id="KW-1133">Transmembrane helix</keyword>
<proteinExistence type="inferred from homology"/>
<sequence>MFLDYFALGVLIFVFLVIFYGIIILHDIPYLIAKKRNHPHADAIHVAGWVSLFTLHVIWPFLWIWATLYRPERGWGMQSHDSSVMQLQQRIAGLEKQLADIKSSSAE</sequence>
<feature type="chain" id="PRO_0000169603" description="Inner membrane protein YiaW">
    <location>
        <begin position="1"/>
        <end position="107"/>
    </location>
</feature>
<feature type="topological domain" description="Cytoplasmic" evidence="2">
    <location>
        <begin position="1"/>
        <end position="6"/>
    </location>
</feature>
<feature type="transmembrane region" description="Helical" evidence="2">
    <location>
        <begin position="7"/>
        <end position="29"/>
    </location>
</feature>
<feature type="topological domain" description="Periplasmic" evidence="2">
    <location>
        <begin position="30"/>
        <end position="43"/>
    </location>
</feature>
<feature type="transmembrane region" description="Helical" evidence="2">
    <location>
        <begin position="44"/>
        <end position="66"/>
    </location>
</feature>
<feature type="topological domain" description="Cytoplasmic" evidence="2">
    <location>
        <begin position="67"/>
        <end position="107"/>
    </location>
</feature>
<gene>
    <name type="primary">yiaW</name>
    <name type="ordered locus">Z5007</name>
    <name type="ordered locus">ECs4463</name>
</gene>
<dbReference type="EMBL" id="AE005174">
    <property type="protein sequence ID" value="AAG58730.1"/>
    <property type="molecule type" value="Genomic_DNA"/>
</dbReference>
<dbReference type="EMBL" id="BA000007">
    <property type="protein sequence ID" value="BAB37886.1"/>
    <property type="molecule type" value="Genomic_DNA"/>
</dbReference>
<dbReference type="PIR" id="F86033">
    <property type="entry name" value="F86033"/>
</dbReference>
<dbReference type="PIR" id="G91186">
    <property type="entry name" value="G91186"/>
</dbReference>
<dbReference type="RefSeq" id="NP_312490.1">
    <property type="nucleotide sequence ID" value="NC_002695.1"/>
</dbReference>
<dbReference type="RefSeq" id="WP_000478195.1">
    <property type="nucleotide sequence ID" value="NZ_VOAI01000004.1"/>
</dbReference>
<dbReference type="SMR" id="P0ADK5"/>
<dbReference type="STRING" id="155864.Z5007"/>
<dbReference type="TCDB" id="9.B.32.1.2">
    <property type="family name" value="the duf3302 or pfam11742 (yibi) family"/>
</dbReference>
<dbReference type="GeneID" id="916071"/>
<dbReference type="KEGG" id="ece:Z5007"/>
<dbReference type="KEGG" id="ecs:ECs_4463"/>
<dbReference type="PATRIC" id="fig|386585.9.peg.4673"/>
<dbReference type="eggNOG" id="ENOG5032S89">
    <property type="taxonomic scope" value="Bacteria"/>
</dbReference>
<dbReference type="HOGENOM" id="CLU_143375_0_0_6"/>
<dbReference type="OMA" id="PDRGWGM"/>
<dbReference type="Proteomes" id="UP000000558">
    <property type="component" value="Chromosome"/>
</dbReference>
<dbReference type="Proteomes" id="UP000002519">
    <property type="component" value="Chromosome"/>
</dbReference>
<dbReference type="GO" id="GO:0005886">
    <property type="term" value="C:plasma membrane"/>
    <property type="evidence" value="ECO:0007669"/>
    <property type="project" value="UniProtKB-SubCell"/>
</dbReference>
<dbReference type="InterPro" id="IPR011223">
    <property type="entry name" value="UCP028770"/>
</dbReference>
<dbReference type="Pfam" id="PF11742">
    <property type="entry name" value="DUF3302"/>
    <property type="match status" value="1"/>
</dbReference>
<dbReference type="PIRSF" id="PIRSF028770">
    <property type="entry name" value="UCP028770"/>
    <property type="match status" value="1"/>
</dbReference>
<evidence type="ECO:0000250" key="1"/>
<evidence type="ECO:0000255" key="2"/>
<evidence type="ECO:0000305" key="3"/>
<comment type="subcellular location">
    <subcellularLocation>
        <location evidence="1">Cell inner membrane</location>
        <topology evidence="1">Multi-pass membrane protein</topology>
    </subcellularLocation>
</comment>
<comment type="similarity">
    <text evidence="3">To E.coli YibI.</text>
</comment>